<feature type="chain" id="PRO_1000117085" description="ATP phosphoribosyltransferase">
    <location>
        <begin position="1"/>
        <end position="289"/>
    </location>
</feature>
<dbReference type="EC" id="2.4.2.17" evidence="1"/>
<dbReference type="EMBL" id="CP000360">
    <property type="protein sequence ID" value="ABF42683.1"/>
    <property type="molecule type" value="Genomic_DNA"/>
</dbReference>
<dbReference type="RefSeq" id="WP_011524482.1">
    <property type="nucleotide sequence ID" value="NC_008009.1"/>
</dbReference>
<dbReference type="SMR" id="Q1IKB7"/>
<dbReference type="STRING" id="204669.Acid345_3682"/>
<dbReference type="EnsemblBacteria" id="ABF42683">
    <property type="protein sequence ID" value="ABF42683"/>
    <property type="gene ID" value="Acid345_3682"/>
</dbReference>
<dbReference type="KEGG" id="aba:Acid345_3682"/>
<dbReference type="eggNOG" id="COG0040">
    <property type="taxonomic scope" value="Bacteria"/>
</dbReference>
<dbReference type="HOGENOM" id="CLU_038115_1_1_0"/>
<dbReference type="OrthoDB" id="9801867at2"/>
<dbReference type="UniPathway" id="UPA00031">
    <property type="reaction ID" value="UER00006"/>
</dbReference>
<dbReference type="Proteomes" id="UP000002432">
    <property type="component" value="Chromosome"/>
</dbReference>
<dbReference type="GO" id="GO:0005737">
    <property type="term" value="C:cytoplasm"/>
    <property type="evidence" value="ECO:0007669"/>
    <property type="project" value="UniProtKB-SubCell"/>
</dbReference>
<dbReference type="GO" id="GO:0005524">
    <property type="term" value="F:ATP binding"/>
    <property type="evidence" value="ECO:0007669"/>
    <property type="project" value="UniProtKB-KW"/>
</dbReference>
<dbReference type="GO" id="GO:0003879">
    <property type="term" value="F:ATP phosphoribosyltransferase activity"/>
    <property type="evidence" value="ECO:0007669"/>
    <property type="project" value="UniProtKB-UniRule"/>
</dbReference>
<dbReference type="GO" id="GO:0000287">
    <property type="term" value="F:magnesium ion binding"/>
    <property type="evidence" value="ECO:0007669"/>
    <property type="project" value="UniProtKB-UniRule"/>
</dbReference>
<dbReference type="GO" id="GO:0000105">
    <property type="term" value="P:L-histidine biosynthetic process"/>
    <property type="evidence" value="ECO:0007669"/>
    <property type="project" value="UniProtKB-UniRule"/>
</dbReference>
<dbReference type="CDD" id="cd13593">
    <property type="entry name" value="PBP2_HisGL3"/>
    <property type="match status" value="1"/>
</dbReference>
<dbReference type="FunFam" id="3.30.70.120:FF:000002">
    <property type="entry name" value="ATP phosphoribosyltransferase"/>
    <property type="match status" value="1"/>
</dbReference>
<dbReference type="Gene3D" id="3.30.70.120">
    <property type="match status" value="1"/>
</dbReference>
<dbReference type="Gene3D" id="3.40.190.10">
    <property type="entry name" value="Periplasmic binding protein-like II"/>
    <property type="match status" value="2"/>
</dbReference>
<dbReference type="HAMAP" id="MF_00079">
    <property type="entry name" value="HisG_Long"/>
    <property type="match status" value="1"/>
</dbReference>
<dbReference type="InterPro" id="IPR020621">
    <property type="entry name" value="ATP-PRT_HisG_long"/>
</dbReference>
<dbReference type="InterPro" id="IPR013820">
    <property type="entry name" value="ATP_PRibTrfase_cat"/>
</dbReference>
<dbReference type="InterPro" id="IPR001348">
    <property type="entry name" value="ATP_PRibTrfase_HisG"/>
</dbReference>
<dbReference type="InterPro" id="IPR013115">
    <property type="entry name" value="HisG_C"/>
</dbReference>
<dbReference type="InterPro" id="IPR011322">
    <property type="entry name" value="N-reg_PII-like_a/b"/>
</dbReference>
<dbReference type="InterPro" id="IPR015867">
    <property type="entry name" value="N-reg_PII/ATP_PRibTrfase_C"/>
</dbReference>
<dbReference type="NCBIfam" id="TIGR00070">
    <property type="entry name" value="hisG"/>
    <property type="match status" value="1"/>
</dbReference>
<dbReference type="NCBIfam" id="TIGR03455">
    <property type="entry name" value="HisG_C-term"/>
    <property type="match status" value="1"/>
</dbReference>
<dbReference type="PANTHER" id="PTHR21403:SF10">
    <property type="entry name" value="ATP PHOSPHORIBOSYLTRANSFERASE"/>
    <property type="match status" value="1"/>
</dbReference>
<dbReference type="PANTHER" id="PTHR21403">
    <property type="entry name" value="ATP PHOSPHORIBOSYLTRANSFERASE ATP-PRTASE"/>
    <property type="match status" value="1"/>
</dbReference>
<dbReference type="Pfam" id="PF01634">
    <property type="entry name" value="HisG"/>
    <property type="match status" value="1"/>
</dbReference>
<dbReference type="Pfam" id="PF08029">
    <property type="entry name" value="HisG_C"/>
    <property type="match status" value="1"/>
</dbReference>
<dbReference type="SUPFAM" id="SSF54913">
    <property type="entry name" value="GlnB-like"/>
    <property type="match status" value="1"/>
</dbReference>
<dbReference type="SUPFAM" id="SSF53850">
    <property type="entry name" value="Periplasmic binding protein-like II"/>
    <property type="match status" value="1"/>
</dbReference>
<evidence type="ECO:0000255" key="1">
    <source>
        <dbReference type="HAMAP-Rule" id="MF_00079"/>
    </source>
</evidence>
<keyword id="KW-0028">Amino-acid biosynthesis</keyword>
<keyword id="KW-0067">ATP-binding</keyword>
<keyword id="KW-0963">Cytoplasm</keyword>
<keyword id="KW-0328">Glycosyltransferase</keyword>
<keyword id="KW-0368">Histidine biosynthesis</keyword>
<keyword id="KW-0460">Magnesium</keyword>
<keyword id="KW-0479">Metal-binding</keyword>
<keyword id="KW-0547">Nucleotide-binding</keyword>
<keyword id="KW-1185">Reference proteome</keyword>
<keyword id="KW-0808">Transferase</keyword>
<reference key="1">
    <citation type="journal article" date="2009" name="Appl. Environ. Microbiol.">
        <title>Three genomes from the phylum Acidobacteria provide insight into the lifestyles of these microorganisms in soils.</title>
        <authorList>
            <person name="Ward N.L."/>
            <person name="Challacombe J.F."/>
            <person name="Janssen P.H."/>
            <person name="Henrissat B."/>
            <person name="Coutinho P.M."/>
            <person name="Wu M."/>
            <person name="Xie G."/>
            <person name="Haft D.H."/>
            <person name="Sait M."/>
            <person name="Badger J."/>
            <person name="Barabote R.D."/>
            <person name="Bradley B."/>
            <person name="Brettin T.S."/>
            <person name="Brinkac L.M."/>
            <person name="Bruce D."/>
            <person name="Creasy T."/>
            <person name="Daugherty S.C."/>
            <person name="Davidsen T.M."/>
            <person name="DeBoy R.T."/>
            <person name="Detter J.C."/>
            <person name="Dodson R.J."/>
            <person name="Durkin A.S."/>
            <person name="Ganapathy A."/>
            <person name="Gwinn-Giglio M."/>
            <person name="Han C.S."/>
            <person name="Khouri H."/>
            <person name="Kiss H."/>
            <person name="Kothari S.P."/>
            <person name="Madupu R."/>
            <person name="Nelson K.E."/>
            <person name="Nelson W.C."/>
            <person name="Paulsen I."/>
            <person name="Penn K."/>
            <person name="Ren Q."/>
            <person name="Rosovitz M.J."/>
            <person name="Selengut J.D."/>
            <person name="Shrivastava S."/>
            <person name="Sullivan S.A."/>
            <person name="Tapia R."/>
            <person name="Thompson L.S."/>
            <person name="Watkins K.L."/>
            <person name="Yang Q."/>
            <person name="Yu C."/>
            <person name="Zafar N."/>
            <person name="Zhou L."/>
            <person name="Kuske C.R."/>
        </authorList>
    </citation>
    <scope>NUCLEOTIDE SEQUENCE [LARGE SCALE GENOMIC DNA]</scope>
    <source>
        <strain>Ellin345</strain>
    </source>
</reference>
<organism>
    <name type="scientific">Koribacter versatilis (strain Ellin345)</name>
    <dbReference type="NCBI Taxonomy" id="204669"/>
    <lineage>
        <taxon>Bacteria</taxon>
        <taxon>Pseudomonadati</taxon>
        <taxon>Acidobacteriota</taxon>
        <taxon>Terriglobia</taxon>
        <taxon>Terriglobales</taxon>
        <taxon>Candidatus Korobacteraceae</taxon>
        <taxon>Candidatus Korobacter</taxon>
    </lineage>
</organism>
<gene>
    <name evidence="1" type="primary">hisG</name>
    <name type="ordered locus">Acid345_3682</name>
</gene>
<sequence length="289" mass="31264">MKLRLGIPKGSLQEATIALFLRAGLTVHTSTRSYTATTDDAEVECMLIRAQEMARYVSKGVLDAGITGMDWVVESGLEVEAVSSLNYSKQSRGNVRWVLAVPEDSPYQRAEDLAGKVIATELVNVTSRYFAARGVPVKIEFSWGATEIKPPTLADAIVEVTETGSSLRANRLRIIDEVMPSSTQLIANVSAMQDDFKRKKVENLALMLEGAIAAQGRVGLMLNVRKGDLANALAVLPALNSPTISPLNDGEWVAVNTIIEETAAWTIIPRLKAANATGIVEYPLNKVVL</sequence>
<comment type="function">
    <text evidence="1">Catalyzes the condensation of ATP and 5-phosphoribose 1-diphosphate to form N'-(5'-phosphoribosyl)-ATP (PR-ATP). Has a crucial role in the pathway because the rate of histidine biosynthesis seems to be controlled primarily by regulation of HisG enzymatic activity.</text>
</comment>
<comment type="catalytic activity">
    <reaction evidence="1">
        <text>1-(5-phospho-beta-D-ribosyl)-ATP + diphosphate = 5-phospho-alpha-D-ribose 1-diphosphate + ATP</text>
        <dbReference type="Rhea" id="RHEA:18473"/>
        <dbReference type="ChEBI" id="CHEBI:30616"/>
        <dbReference type="ChEBI" id="CHEBI:33019"/>
        <dbReference type="ChEBI" id="CHEBI:58017"/>
        <dbReference type="ChEBI" id="CHEBI:73183"/>
        <dbReference type="EC" id="2.4.2.17"/>
    </reaction>
</comment>
<comment type="cofactor">
    <cofactor evidence="1">
        <name>Mg(2+)</name>
        <dbReference type="ChEBI" id="CHEBI:18420"/>
    </cofactor>
</comment>
<comment type="activity regulation">
    <text evidence="1">Feedback inhibited by histidine.</text>
</comment>
<comment type="pathway">
    <text evidence="1">Amino-acid biosynthesis; L-histidine biosynthesis; L-histidine from 5-phospho-alpha-D-ribose 1-diphosphate: step 1/9.</text>
</comment>
<comment type="subcellular location">
    <subcellularLocation>
        <location evidence="1">Cytoplasm</location>
    </subcellularLocation>
</comment>
<comment type="similarity">
    <text evidence="1">Belongs to the ATP phosphoribosyltransferase family. Long subfamily.</text>
</comment>
<name>HIS1_KORVE</name>
<proteinExistence type="inferred from homology"/>
<accession>Q1IKB7</accession>
<protein>
    <recommendedName>
        <fullName evidence="1">ATP phosphoribosyltransferase</fullName>
        <shortName evidence="1">ATP-PRT</shortName>
        <shortName evidence="1">ATP-PRTase</shortName>
        <ecNumber evidence="1">2.4.2.17</ecNumber>
    </recommendedName>
</protein>